<sequence>MIVKICGLKKAVDVAAAVDNGADMIGFVFAKSKRQVTVEKAHELAKNIPANVKKVGVFVNPTEEELKAAIKGVPLDIVQLHGQEPAKQANRTDAKVIKAFPVKDGKLPTNINDYPNAYILLDAPAEEYEGGSGKTFDWDKINRDMLTKNKLIIAGGLNAQNVQEAIKRFEPYAVDISSGVETNGEKDPEKIKCFIKTAKGVE</sequence>
<keyword id="KW-0028">Amino-acid biosynthesis</keyword>
<keyword id="KW-0057">Aromatic amino acid biosynthesis</keyword>
<keyword id="KW-0413">Isomerase</keyword>
<keyword id="KW-0822">Tryptophan biosynthesis</keyword>
<gene>
    <name evidence="1" type="primary">trpF</name>
    <name type="ordered locus">LMOf2365_1651</name>
</gene>
<protein>
    <recommendedName>
        <fullName evidence="1">N-(5'-phosphoribosyl)anthranilate isomerase</fullName>
        <shortName evidence="1">PRAI</shortName>
        <ecNumber evidence="1">5.3.1.24</ecNumber>
    </recommendedName>
</protein>
<accession>Q71Z39</accession>
<evidence type="ECO:0000255" key="1">
    <source>
        <dbReference type="HAMAP-Rule" id="MF_00135"/>
    </source>
</evidence>
<feature type="chain" id="PRO_0000154364" description="N-(5'-phosphoribosyl)anthranilate isomerase">
    <location>
        <begin position="1"/>
        <end position="202"/>
    </location>
</feature>
<proteinExistence type="inferred from homology"/>
<organism>
    <name type="scientific">Listeria monocytogenes serotype 4b (strain F2365)</name>
    <dbReference type="NCBI Taxonomy" id="265669"/>
    <lineage>
        <taxon>Bacteria</taxon>
        <taxon>Bacillati</taxon>
        <taxon>Bacillota</taxon>
        <taxon>Bacilli</taxon>
        <taxon>Bacillales</taxon>
        <taxon>Listeriaceae</taxon>
        <taxon>Listeria</taxon>
    </lineage>
</organism>
<comment type="catalytic activity">
    <reaction evidence="1">
        <text>N-(5-phospho-beta-D-ribosyl)anthranilate = 1-(2-carboxyphenylamino)-1-deoxy-D-ribulose 5-phosphate</text>
        <dbReference type="Rhea" id="RHEA:21540"/>
        <dbReference type="ChEBI" id="CHEBI:18277"/>
        <dbReference type="ChEBI" id="CHEBI:58613"/>
        <dbReference type="EC" id="5.3.1.24"/>
    </reaction>
</comment>
<comment type="pathway">
    <text evidence="1">Amino-acid biosynthesis; L-tryptophan biosynthesis; L-tryptophan from chorismate: step 3/5.</text>
</comment>
<comment type="similarity">
    <text evidence="1">Belongs to the TrpF family.</text>
</comment>
<dbReference type="EC" id="5.3.1.24" evidence="1"/>
<dbReference type="EMBL" id="AE017262">
    <property type="protein sequence ID" value="AAT04425.1"/>
    <property type="molecule type" value="Genomic_DNA"/>
</dbReference>
<dbReference type="RefSeq" id="WP_003731617.1">
    <property type="nucleotide sequence ID" value="NC_002973.6"/>
</dbReference>
<dbReference type="SMR" id="Q71Z39"/>
<dbReference type="KEGG" id="lmf:LMOf2365_1651"/>
<dbReference type="HOGENOM" id="CLU_076364_1_0_9"/>
<dbReference type="UniPathway" id="UPA00035">
    <property type="reaction ID" value="UER00042"/>
</dbReference>
<dbReference type="GO" id="GO:0004640">
    <property type="term" value="F:phosphoribosylanthranilate isomerase activity"/>
    <property type="evidence" value="ECO:0007669"/>
    <property type="project" value="UniProtKB-UniRule"/>
</dbReference>
<dbReference type="GO" id="GO:0000162">
    <property type="term" value="P:L-tryptophan biosynthetic process"/>
    <property type="evidence" value="ECO:0007669"/>
    <property type="project" value="UniProtKB-UniRule"/>
</dbReference>
<dbReference type="CDD" id="cd00405">
    <property type="entry name" value="PRAI"/>
    <property type="match status" value="1"/>
</dbReference>
<dbReference type="FunFam" id="3.20.20.70:FF:000075">
    <property type="entry name" value="Tryptophan biosynthesis protein TRP1"/>
    <property type="match status" value="1"/>
</dbReference>
<dbReference type="Gene3D" id="3.20.20.70">
    <property type="entry name" value="Aldolase class I"/>
    <property type="match status" value="1"/>
</dbReference>
<dbReference type="HAMAP" id="MF_00135">
    <property type="entry name" value="PRAI"/>
    <property type="match status" value="1"/>
</dbReference>
<dbReference type="InterPro" id="IPR013785">
    <property type="entry name" value="Aldolase_TIM"/>
</dbReference>
<dbReference type="InterPro" id="IPR001240">
    <property type="entry name" value="PRAI_dom"/>
</dbReference>
<dbReference type="InterPro" id="IPR011060">
    <property type="entry name" value="RibuloseP-bd_barrel"/>
</dbReference>
<dbReference type="InterPro" id="IPR044643">
    <property type="entry name" value="TrpF_fam"/>
</dbReference>
<dbReference type="NCBIfam" id="NF002300">
    <property type="entry name" value="PRK01222.1-7"/>
    <property type="match status" value="1"/>
</dbReference>
<dbReference type="PANTHER" id="PTHR42894">
    <property type="entry name" value="N-(5'-PHOSPHORIBOSYL)ANTHRANILATE ISOMERASE"/>
    <property type="match status" value="1"/>
</dbReference>
<dbReference type="PANTHER" id="PTHR42894:SF1">
    <property type="entry name" value="N-(5'-PHOSPHORIBOSYL)ANTHRANILATE ISOMERASE"/>
    <property type="match status" value="1"/>
</dbReference>
<dbReference type="Pfam" id="PF00697">
    <property type="entry name" value="PRAI"/>
    <property type="match status" value="1"/>
</dbReference>
<dbReference type="SUPFAM" id="SSF51366">
    <property type="entry name" value="Ribulose-phoshate binding barrel"/>
    <property type="match status" value="1"/>
</dbReference>
<reference key="1">
    <citation type="journal article" date="2004" name="Nucleic Acids Res.">
        <title>Whole genome comparisons of serotype 4b and 1/2a strains of the food-borne pathogen Listeria monocytogenes reveal new insights into the core genome components of this species.</title>
        <authorList>
            <person name="Nelson K.E."/>
            <person name="Fouts D.E."/>
            <person name="Mongodin E.F."/>
            <person name="Ravel J."/>
            <person name="DeBoy R.T."/>
            <person name="Kolonay J.F."/>
            <person name="Rasko D.A."/>
            <person name="Angiuoli S.V."/>
            <person name="Gill S.R."/>
            <person name="Paulsen I.T."/>
            <person name="Peterson J.D."/>
            <person name="White O."/>
            <person name="Nelson W.C."/>
            <person name="Nierman W.C."/>
            <person name="Beanan M.J."/>
            <person name="Brinkac L.M."/>
            <person name="Daugherty S.C."/>
            <person name="Dodson R.J."/>
            <person name="Durkin A.S."/>
            <person name="Madupu R."/>
            <person name="Haft D.H."/>
            <person name="Selengut J."/>
            <person name="Van Aken S.E."/>
            <person name="Khouri H.M."/>
            <person name="Fedorova N."/>
            <person name="Forberger H.A."/>
            <person name="Tran B."/>
            <person name="Kathariou S."/>
            <person name="Wonderling L.D."/>
            <person name="Uhlich G.A."/>
            <person name="Bayles D.O."/>
            <person name="Luchansky J.B."/>
            <person name="Fraser C.M."/>
        </authorList>
    </citation>
    <scope>NUCLEOTIDE SEQUENCE [LARGE SCALE GENOMIC DNA]</scope>
    <source>
        <strain>F2365</strain>
    </source>
</reference>
<name>TRPF_LISMF</name>